<gene>
    <name evidence="1" type="primary">purM</name>
    <name type="ordered locus">TTE0590</name>
</gene>
<sequence length="336" mass="36646">MKYKDAGVNIDEGNKFVKMIKPFAEKTIKEGVLEGIGGFAALYEIKNYKNPVLVSSTDGVGTKLKIAFMMDKHDTVGIDLVAMCVNDVIVVGAKPLFFLDYFATGKLESEKAIQVIKGVAEGCEIAGCALIGGETAELPGFYKEGEYDLAGFCVGIVEKEEIIDTSSMAIGDVVIGLSSSGLHSNGYSLVRKVFFEKNNFSIEDYVPDIGKTLGEVLLTPTKIYVKSVEVLKGLKIKGMAHITGGGFIENIPRILRKGVSARIYKGSWEVPIIFDMIRRLGEIEEKEMYRTFNMGIGMVVIIDKEEVEKALKRLKEVGETAFVIGEIVEGEGGVIL</sequence>
<dbReference type="EC" id="6.3.3.1" evidence="1"/>
<dbReference type="EMBL" id="AE008691">
    <property type="protein sequence ID" value="AAM23860.1"/>
    <property type="molecule type" value="Genomic_DNA"/>
</dbReference>
<dbReference type="RefSeq" id="WP_011025005.1">
    <property type="nucleotide sequence ID" value="NC_003869.1"/>
</dbReference>
<dbReference type="SMR" id="Q8RC57"/>
<dbReference type="STRING" id="273068.TTE0590"/>
<dbReference type="KEGG" id="tte:TTE0590"/>
<dbReference type="eggNOG" id="COG0150">
    <property type="taxonomic scope" value="Bacteria"/>
</dbReference>
<dbReference type="HOGENOM" id="CLU_047116_0_0_9"/>
<dbReference type="OrthoDB" id="9802507at2"/>
<dbReference type="UniPathway" id="UPA00074">
    <property type="reaction ID" value="UER00129"/>
</dbReference>
<dbReference type="Proteomes" id="UP000000555">
    <property type="component" value="Chromosome"/>
</dbReference>
<dbReference type="GO" id="GO:0005829">
    <property type="term" value="C:cytosol"/>
    <property type="evidence" value="ECO:0007669"/>
    <property type="project" value="TreeGrafter"/>
</dbReference>
<dbReference type="GO" id="GO:0005524">
    <property type="term" value="F:ATP binding"/>
    <property type="evidence" value="ECO:0007669"/>
    <property type="project" value="UniProtKB-KW"/>
</dbReference>
<dbReference type="GO" id="GO:0004637">
    <property type="term" value="F:phosphoribosylamine-glycine ligase activity"/>
    <property type="evidence" value="ECO:0007669"/>
    <property type="project" value="TreeGrafter"/>
</dbReference>
<dbReference type="GO" id="GO:0004641">
    <property type="term" value="F:phosphoribosylformylglycinamidine cyclo-ligase activity"/>
    <property type="evidence" value="ECO:0007669"/>
    <property type="project" value="UniProtKB-UniRule"/>
</dbReference>
<dbReference type="GO" id="GO:0006189">
    <property type="term" value="P:'de novo' IMP biosynthetic process"/>
    <property type="evidence" value="ECO:0007669"/>
    <property type="project" value="UniProtKB-UniRule"/>
</dbReference>
<dbReference type="GO" id="GO:0046084">
    <property type="term" value="P:adenine biosynthetic process"/>
    <property type="evidence" value="ECO:0007669"/>
    <property type="project" value="TreeGrafter"/>
</dbReference>
<dbReference type="CDD" id="cd02196">
    <property type="entry name" value="PurM"/>
    <property type="match status" value="1"/>
</dbReference>
<dbReference type="FunFam" id="3.30.1330.10:FF:000001">
    <property type="entry name" value="Phosphoribosylformylglycinamidine cyclo-ligase"/>
    <property type="match status" value="1"/>
</dbReference>
<dbReference type="FunFam" id="3.90.650.10:FF:000001">
    <property type="entry name" value="Phosphoribosylformylglycinamidine cyclo-ligase"/>
    <property type="match status" value="1"/>
</dbReference>
<dbReference type="Gene3D" id="3.90.650.10">
    <property type="entry name" value="PurM-like C-terminal domain"/>
    <property type="match status" value="1"/>
</dbReference>
<dbReference type="Gene3D" id="3.30.1330.10">
    <property type="entry name" value="PurM-like, N-terminal domain"/>
    <property type="match status" value="1"/>
</dbReference>
<dbReference type="HAMAP" id="MF_00741">
    <property type="entry name" value="AIRS"/>
    <property type="match status" value="1"/>
</dbReference>
<dbReference type="InterPro" id="IPR010918">
    <property type="entry name" value="PurM-like_C_dom"/>
</dbReference>
<dbReference type="InterPro" id="IPR036676">
    <property type="entry name" value="PurM-like_C_sf"/>
</dbReference>
<dbReference type="InterPro" id="IPR016188">
    <property type="entry name" value="PurM-like_N"/>
</dbReference>
<dbReference type="InterPro" id="IPR036921">
    <property type="entry name" value="PurM-like_N_sf"/>
</dbReference>
<dbReference type="InterPro" id="IPR004733">
    <property type="entry name" value="PurM_cligase"/>
</dbReference>
<dbReference type="NCBIfam" id="TIGR00878">
    <property type="entry name" value="purM"/>
    <property type="match status" value="1"/>
</dbReference>
<dbReference type="PANTHER" id="PTHR10520:SF12">
    <property type="entry name" value="TRIFUNCTIONAL PURINE BIOSYNTHETIC PROTEIN ADENOSINE-3"/>
    <property type="match status" value="1"/>
</dbReference>
<dbReference type="PANTHER" id="PTHR10520">
    <property type="entry name" value="TRIFUNCTIONAL PURINE BIOSYNTHETIC PROTEIN ADENOSINE-3-RELATED"/>
    <property type="match status" value="1"/>
</dbReference>
<dbReference type="Pfam" id="PF00586">
    <property type="entry name" value="AIRS"/>
    <property type="match status" value="1"/>
</dbReference>
<dbReference type="Pfam" id="PF02769">
    <property type="entry name" value="AIRS_C"/>
    <property type="match status" value="1"/>
</dbReference>
<dbReference type="SUPFAM" id="SSF56042">
    <property type="entry name" value="PurM C-terminal domain-like"/>
    <property type="match status" value="1"/>
</dbReference>
<dbReference type="SUPFAM" id="SSF55326">
    <property type="entry name" value="PurM N-terminal domain-like"/>
    <property type="match status" value="1"/>
</dbReference>
<organism>
    <name type="scientific">Caldanaerobacter subterraneus subsp. tengcongensis (strain DSM 15242 / JCM 11007 / NBRC 100824 / MB4)</name>
    <name type="common">Thermoanaerobacter tengcongensis</name>
    <dbReference type="NCBI Taxonomy" id="273068"/>
    <lineage>
        <taxon>Bacteria</taxon>
        <taxon>Bacillati</taxon>
        <taxon>Bacillota</taxon>
        <taxon>Clostridia</taxon>
        <taxon>Thermoanaerobacterales</taxon>
        <taxon>Thermoanaerobacteraceae</taxon>
        <taxon>Caldanaerobacter</taxon>
    </lineage>
</organism>
<accession>Q8RC57</accession>
<keyword id="KW-0067">ATP-binding</keyword>
<keyword id="KW-0963">Cytoplasm</keyword>
<keyword id="KW-0436">Ligase</keyword>
<keyword id="KW-0547">Nucleotide-binding</keyword>
<keyword id="KW-0658">Purine biosynthesis</keyword>
<keyword id="KW-1185">Reference proteome</keyword>
<evidence type="ECO:0000255" key="1">
    <source>
        <dbReference type="HAMAP-Rule" id="MF_00741"/>
    </source>
</evidence>
<name>PUR5_CALS4</name>
<proteinExistence type="inferred from homology"/>
<feature type="chain" id="PRO_0000148269" description="Phosphoribosylformylglycinamidine cyclo-ligase">
    <location>
        <begin position="1"/>
        <end position="336"/>
    </location>
</feature>
<comment type="catalytic activity">
    <reaction evidence="1">
        <text>2-formamido-N(1)-(5-O-phospho-beta-D-ribosyl)acetamidine + ATP = 5-amino-1-(5-phospho-beta-D-ribosyl)imidazole + ADP + phosphate + H(+)</text>
        <dbReference type="Rhea" id="RHEA:23032"/>
        <dbReference type="ChEBI" id="CHEBI:15378"/>
        <dbReference type="ChEBI" id="CHEBI:30616"/>
        <dbReference type="ChEBI" id="CHEBI:43474"/>
        <dbReference type="ChEBI" id="CHEBI:137981"/>
        <dbReference type="ChEBI" id="CHEBI:147287"/>
        <dbReference type="ChEBI" id="CHEBI:456216"/>
        <dbReference type="EC" id="6.3.3.1"/>
    </reaction>
</comment>
<comment type="pathway">
    <text evidence="1">Purine metabolism; IMP biosynthesis via de novo pathway; 5-amino-1-(5-phospho-D-ribosyl)imidazole from N(2)-formyl-N(1)-(5-phospho-D-ribosyl)glycinamide: step 2/2.</text>
</comment>
<comment type="subcellular location">
    <subcellularLocation>
        <location evidence="1">Cytoplasm</location>
    </subcellularLocation>
</comment>
<comment type="similarity">
    <text evidence="1">Belongs to the AIR synthase family.</text>
</comment>
<protein>
    <recommendedName>
        <fullName evidence="1">Phosphoribosylformylglycinamidine cyclo-ligase</fullName>
        <ecNumber evidence="1">6.3.3.1</ecNumber>
    </recommendedName>
    <alternativeName>
        <fullName evidence="1">AIR synthase</fullName>
    </alternativeName>
    <alternativeName>
        <fullName evidence="1">AIRS</fullName>
    </alternativeName>
    <alternativeName>
        <fullName evidence="1">Phosphoribosyl-aminoimidazole synthetase</fullName>
    </alternativeName>
</protein>
<reference key="1">
    <citation type="journal article" date="2002" name="Genome Res.">
        <title>A complete sequence of the T. tengcongensis genome.</title>
        <authorList>
            <person name="Bao Q."/>
            <person name="Tian Y."/>
            <person name="Li W."/>
            <person name="Xu Z."/>
            <person name="Xuan Z."/>
            <person name="Hu S."/>
            <person name="Dong W."/>
            <person name="Yang J."/>
            <person name="Chen Y."/>
            <person name="Xue Y."/>
            <person name="Xu Y."/>
            <person name="Lai X."/>
            <person name="Huang L."/>
            <person name="Dong X."/>
            <person name="Ma Y."/>
            <person name="Ling L."/>
            <person name="Tan H."/>
            <person name="Chen R."/>
            <person name="Wang J."/>
            <person name="Yu J."/>
            <person name="Yang H."/>
        </authorList>
    </citation>
    <scope>NUCLEOTIDE SEQUENCE [LARGE SCALE GENOMIC DNA]</scope>
    <source>
        <strain>DSM 15242 / JCM 11007 / NBRC 100824 / MB4</strain>
    </source>
</reference>